<evidence type="ECO:0000250" key="1"/>
<evidence type="ECO:0000250" key="2">
    <source>
        <dbReference type="UniProtKB" id="P04179"/>
    </source>
</evidence>
<evidence type="ECO:0000250" key="3">
    <source>
        <dbReference type="UniProtKB" id="P07895"/>
    </source>
</evidence>
<evidence type="ECO:0000250" key="4">
    <source>
        <dbReference type="UniProtKB" id="P09671"/>
    </source>
</evidence>
<evidence type="ECO:0000305" key="5"/>
<feature type="chain" id="PRO_0000159949" description="Superoxide dismutase [Mn], mitochondrial">
    <location>
        <begin position="1"/>
        <end position="198"/>
    </location>
</feature>
<feature type="binding site" evidence="1">
    <location>
        <position position="26"/>
    </location>
    <ligand>
        <name>Mn(2+)</name>
        <dbReference type="ChEBI" id="CHEBI:29035"/>
    </ligand>
</feature>
<feature type="binding site" evidence="1">
    <location>
        <position position="74"/>
    </location>
    <ligand>
        <name>Mn(2+)</name>
        <dbReference type="ChEBI" id="CHEBI:29035"/>
    </ligand>
</feature>
<feature type="binding site" evidence="1">
    <location>
        <position position="159"/>
    </location>
    <ligand>
        <name>Mn(2+)</name>
        <dbReference type="ChEBI" id="CHEBI:29035"/>
    </ligand>
</feature>
<feature type="binding site" evidence="1">
    <location>
        <position position="163"/>
    </location>
    <ligand>
        <name>Mn(2+)</name>
        <dbReference type="ChEBI" id="CHEBI:29035"/>
    </ligand>
</feature>
<feature type="modified residue" description="3'-nitrotyrosine" evidence="2">
    <location>
        <position position="34"/>
    </location>
</feature>
<feature type="modified residue" description="N6-acetyllysine; alternate" evidence="2">
    <location>
        <position position="44"/>
    </location>
</feature>
<feature type="modified residue" description="N6-succinyllysine; alternate" evidence="4">
    <location>
        <position position="44"/>
    </location>
</feature>
<feature type="modified residue" description="N6-acetyllysine; alternate" evidence="4">
    <location>
        <position position="51"/>
    </location>
</feature>
<feature type="modified residue" description="N6-succinyllysine; alternate" evidence="4">
    <location>
        <position position="51"/>
    </location>
</feature>
<feature type="modified residue" description="N6-acetyllysine" evidence="4">
    <location>
        <position position="90"/>
    </location>
</feature>
<feature type="modified residue" description="N6-acetyllysine; alternate" evidence="4">
    <location>
        <position position="98"/>
    </location>
</feature>
<feature type="modified residue" description="N6-succinyllysine; alternate" evidence="4">
    <location>
        <position position="98"/>
    </location>
</feature>
<feature type="modified residue" description="N6-acetyllysine; alternate" evidence="2">
    <location>
        <position position="106"/>
    </location>
</feature>
<feature type="modified residue" description="N6-succinyllysine; alternate" evidence="4">
    <location>
        <position position="106"/>
    </location>
</feature>
<feature type="modified residue" description="N6-acetyllysine" evidence="4">
    <location>
        <position position="178"/>
    </location>
</feature>
<comment type="function">
    <text evidence="3">Destroys superoxide anion radicals which are normally produced within the cells and which are toxic to biological systems.</text>
</comment>
<comment type="catalytic activity">
    <reaction>
        <text>2 superoxide + 2 H(+) = H2O2 + O2</text>
        <dbReference type="Rhea" id="RHEA:20696"/>
        <dbReference type="ChEBI" id="CHEBI:15378"/>
        <dbReference type="ChEBI" id="CHEBI:15379"/>
        <dbReference type="ChEBI" id="CHEBI:16240"/>
        <dbReference type="ChEBI" id="CHEBI:18421"/>
        <dbReference type="EC" id="1.15.1.1"/>
    </reaction>
</comment>
<comment type="cofactor">
    <cofactor evidence="2">
        <name>Mn(2+)</name>
        <dbReference type="ChEBI" id="CHEBI:29035"/>
    </cofactor>
    <text evidence="2">Binds 1 Mn(2+) ion per subunit.</text>
</comment>
<comment type="subunit">
    <text evidence="1">Homotetramer.</text>
</comment>
<comment type="subcellular location">
    <subcellularLocation>
        <location evidence="1">Mitochondrion matrix</location>
    </subcellularLocation>
</comment>
<comment type="PTM">
    <text evidence="3">Nitrated under oxidative stress. Nitration coupled with oxidation inhibits the catalytic activity.</text>
</comment>
<comment type="PTM">
    <text evidence="2">Acetylation at Lys-98 decreases enzymatic activity. Deacetylated by SIRT3 upon exposure to ionizing radiations or after long fasting (By similarity).</text>
</comment>
<comment type="PTM">
    <text evidence="2">Polyubiquitinated; leading to proteasomal degradation. Deubiquitinated by USP36 which increases protein stability.</text>
</comment>
<comment type="similarity">
    <text evidence="5">Belongs to the iron/manganese superoxide dismutase family.</text>
</comment>
<comment type="sequence caution" evidence="5">
    <conflict type="erroneous initiation">
        <sequence resource="EMBL-CDS" id="BAC20360"/>
    </conflict>
    <text>Extended N-terminus.</text>
</comment>
<protein>
    <recommendedName>
        <fullName>Superoxide dismutase [Mn], mitochondrial</fullName>
        <ecNumber>1.15.1.1</ecNumber>
    </recommendedName>
</protein>
<gene>
    <name type="primary">SOD2</name>
</gene>
<accession>Q8HXP0</accession>
<sequence length="198" mass="22248">KHSLPDLPYDYGALEPHINAQIMQLHHSKHHAAYVNNLNDTEEKYKEALAKGDVTAQIALQPALKFNGGGHINHSIFWTNLSPNGGGEPKGELLEAIKRDFGSFDKFKERLTAASVGVQGSGWGWLGFNKERGHLQIAACPNQDPLQGTTGLIPLLGIDVWEHAYYLQYKNVRPDYLKAIWNVINWENVTERYMACKK</sequence>
<proteinExistence type="evidence at transcript level"/>
<keyword id="KW-0007">Acetylation</keyword>
<keyword id="KW-0464">Manganese</keyword>
<keyword id="KW-0479">Metal-binding</keyword>
<keyword id="KW-0496">Mitochondrion</keyword>
<keyword id="KW-0944">Nitration</keyword>
<keyword id="KW-0560">Oxidoreductase</keyword>
<keyword id="KW-1185">Reference proteome</keyword>
<keyword id="KW-0832">Ubl conjugation</keyword>
<reference key="1">
    <citation type="journal article" date="2002" name="Gene">
        <title>Structure, molecular evolution, and gene expression of primate superoxide dismutases.</title>
        <authorList>
            <person name="Fukuhara R."/>
            <person name="Tezuka T."/>
            <person name="Kageyama T."/>
        </authorList>
    </citation>
    <scope>NUCLEOTIDE SEQUENCE [MRNA]</scope>
</reference>
<dbReference type="EC" id="1.15.1.1"/>
<dbReference type="EMBL" id="AB087281">
    <property type="protein sequence ID" value="BAC20360.1"/>
    <property type="status" value="ALT_INIT"/>
    <property type="molecule type" value="mRNA"/>
</dbReference>
<dbReference type="RefSeq" id="NP_001254675.1">
    <property type="nucleotide sequence ID" value="NM_001267746.1"/>
</dbReference>
<dbReference type="SMR" id="Q8HXP0"/>
<dbReference type="STRING" id="9483.ENSCJAP00000021521"/>
<dbReference type="GeneID" id="100410185"/>
<dbReference type="KEGG" id="cjc:100410185"/>
<dbReference type="CTD" id="6648"/>
<dbReference type="eggNOG" id="KOG0876">
    <property type="taxonomic scope" value="Eukaryota"/>
</dbReference>
<dbReference type="InParanoid" id="Q8HXP0"/>
<dbReference type="OrthoDB" id="239262at2759"/>
<dbReference type="Proteomes" id="UP000008225">
    <property type="component" value="Unplaced"/>
</dbReference>
<dbReference type="GO" id="GO:0005759">
    <property type="term" value="C:mitochondrial matrix"/>
    <property type="evidence" value="ECO:0007669"/>
    <property type="project" value="UniProtKB-SubCell"/>
</dbReference>
<dbReference type="GO" id="GO:0030145">
    <property type="term" value="F:manganese ion binding"/>
    <property type="evidence" value="ECO:0000250"/>
    <property type="project" value="UniProtKB"/>
</dbReference>
<dbReference type="GO" id="GO:0004784">
    <property type="term" value="F:superoxide dismutase activity"/>
    <property type="evidence" value="ECO:0000250"/>
    <property type="project" value="UniProtKB"/>
</dbReference>
<dbReference type="GO" id="GO:0034599">
    <property type="term" value="P:cellular response to oxidative stress"/>
    <property type="evidence" value="ECO:0000250"/>
    <property type="project" value="UniProtKB"/>
</dbReference>
<dbReference type="GO" id="GO:0006357">
    <property type="term" value="P:regulation of transcription by RNA polymerase II"/>
    <property type="evidence" value="ECO:0000250"/>
    <property type="project" value="UniProtKB"/>
</dbReference>
<dbReference type="FunFam" id="1.10.287.990:FF:000001">
    <property type="entry name" value="Superoxide dismutase"/>
    <property type="match status" value="1"/>
</dbReference>
<dbReference type="FunFam" id="3.55.40.20:FF:000003">
    <property type="entry name" value="Superoxide dismutase [Mn], mitochondrial"/>
    <property type="match status" value="1"/>
</dbReference>
<dbReference type="Gene3D" id="1.10.287.990">
    <property type="entry name" value="Fe,Mn superoxide dismutase (SOD) domain"/>
    <property type="match status" value="1"/>
</dbReference>
<dbReference type="Gene3D" id="3.55.40.20">
    <property type="entry name" value="Iron/manganese superoxide dismutase, C-terminal domain"/>
    <property type="match status" value="1"/>
</dbReference>
<dbReference type="InterPro" id="IPR050265">
    <property type="entry name" value="Fe/Mn_Superoxide_Dismutase"/>
</dbReference>
<dbReference type="InterPro" id="IPR001189">
    <property type="entry name" value="Mn/Fe_SOD"/>
</dbReference>
<dbReference type="InterPro" id="IPR019833">
    <property type="entry name" value="Mn/Fe_SOD_BS"/>
</dbReference>
<dbReference type="InterPro" id="IPR019832">
    <property type="entry name" value="Mn/Fe_SOD_C"/>
</dbReference>
<dbReference type="InterPro" id="IPR019831">
    <property type="entry name" value="Mn/Fe_SOD_N"/>
</dbReference>
<dbReference type="InterPro" id="IPR036324">
    <property type="entry name" value="Mn/Fe_SOD_N_sf"/>
</dbReference>
<dbReference type="InterPro" id="IPR036314">
    <property type="entry name" value="SOD_C_sf"/>
</dbReference>
<dbReference type="PANTHER" id="PTHR11404">
    <property type="entry name" value="SUPEROXIDE DISMUTASE 2"/>
    <property type="match status" value="1"/>
</dbReference>
<dbReference type="PANTHER" id="PTHR11404:SF6">
    <property type="entry name" value="SUPEROXIDE DISMUTASE [MN], MITOCHONDRIAL"/>
    <property type="match status" value="1"/>
</dbReference>
<dbReference type="Pfam" id="PF02777">
    <property type="entry name" value="Sod_Fe_C"/>
    <property type="match status" value="1"/>
</dbReference>
<dbReference type="Pfam" id="PF00081">
    <property type="entry name" value="Sod_Fe_N"/>
    <property type="match status" value="1"/>
</dbReference>
<dbReference type="PIRSF" id="PIRSF000349">
    <property type="entry name" value="SODismutase"/>
    <property type="match status" value="1"/>
</dbReference>
<dbReference type="PRINTS" id="PR01703">
    <property type="entry name" value="MNSODISMTASE"/>
</dbReference>
<dbReference type="SUPFAM" id="SSF54719">
    <property type="entry name" value="Fe,Mn superoxide dismutase (SOD), C-terminal domain"/>
    <property type="match status" value="1"/>
</dbReference>
<dbReference type="SUPFAM" id="SSF46609">
    <property type="entry name" value="Fe,Mn superoxide dismutase (SOD), N-terminal domain"/>
    <property type="match status" value="1"/>
</dbReference>
<dbReference type="PROSITE" id="PS00088">
    <property type="entry name" value="SOD_MN"/>
    <property type="match status" value="1"/>
</dbReference>
<organism>
    <name type="scientific">Callithrix jacchus</name>
    <name type="common">White-tufted-ear marmoset</name>
    <dbReference type="NCBI Taxonomy" id="9483"/>
    <lineage>
        <taxon>Eukaryota</taxon>
        <taxon>Metazoa</taxon>
        <taxon>Chordata</taxon>
        <taxon>Craniata</taxon>
        <taxon>Vertebrata</taxon>
        <taxon>Euteleostomi</taxon>
        <taxon>Mammalia</taxon>
        <taxon>Eutheria</taxon>
        <taxon>Euarchontoglires</taxon>
        <taxon>Primates</taxon>
        <taxon>Haplorrhini</taxon>
        <taxon>Platyrrhini</taxon>
        <taxon>Cebidae</taxon>
        <taxon>Callitrichinae</taxon>
        <taxon>Callithrix</taxon>
        <taxon>Callithrix</taxon>
    </lineage>
</organism>
<name>SODM_CALJA</name>